<organism>
    <name type="scientific">Pseudomonas putida (strain ATCC 700007 / DSM 6899 / JCM 31910 / BCRC 17059 / LMG 24140 / F1)</name>
    <dbReference type="NCBI Taxonomy" id="351746"/>
    <lineage>
        <taxon>Bacteria</taxon>
        <taxon>Pseudomonadati</taxon>
        <taxon>Pseudomonadota</taxon>
        <taxon>Gammaproteobacteria</taxon>
        <taxon>Pseudomonadales</taxon>
        <taxon>Pseudomonadaceae</taxon>
        <taxon>Pseudomonas</taxon>
    </lineage>
</organism>
<sequence length="76" mass="8927">MARFFRRRKFCRFTAEDVKEIDFKDLNTLKAYVSETGKIVPSRITGTKARYQRQLATAIKRARFLALLPYTDSHGR</sequence>
<feature type="chain" id="PRO_1000003572" description="Small ribosomal subunit protein bS18">
    <location>
        <begin position="1"/>
        <end position="76"/>
    </location>
</feature>
<protein>
    <recommendedName>
        <fullName evidence="1">Small ribosomal subunit protein bS18</fullName>
    </recommendedName>
    <alternativeName>
        <fullName evidence="2">30S ribosomal protein S18</fullName>
    </alternativeName>
</protein>
<proteinExistence type="inferred from homology"/>
<dbReference type="EMBL" id="CP000712">
    <property type="protein sequence ID" value="ABQ80877.1"/>
    <property type="molecule type" value="Genomic_DNA"/>
</dbReference>
<dbReference type="SMR" id="A5W9R7"/>
<dbReference type="KEGG" id="ppf:Pput_4757"/>
<dbReference type="eggNOG" id="COG0238">
    <property type="taxonomic scope" value="Bacteria"/>
</dbReference>
<dbReference type="HOGENOM" id="CLU_148710_2_3_6"/>
<dbReference type="GO" id="GO:0022627">
    <property type="term" value="C:cytosolic small ribosomal subunit"/>
    <property type="evidence" value="ECO:0007669"/>
    <property type="project" value="TreeGrafter"/>
</dbReference>
<dbReference type="GO" id="GO:0070181">
    <property type="term" value="F:small ribosomal subunit rRNA binding"/>
    <property type="evidence" value="ECO:0007669"/>
    <property type="project" value="TreeGrafter"/>
</dbReference>
<dbReference type="GO" id="GO:0003735">
    <property type="term" value="F:structural constituent of ribosome"/>
    <property type="evidence" value="ECO:0007669"/>
    <property type="project" value="InterPro"/>
</dbReference>
<dbReference type="GO" id="GO:0006412">
    <property type="term" value="P:translation"/>
    <property type="evidence" value="ECO:0007669"/>
    <property type="project" value="UniProtKB-UniRule"/>
</dbReference>
<dbReference type="FunFam" id="4.10.640.10:FF:000001">
    <property type="entry name" value="30S ribosomal protein S18"/>
    <property type="match status" value="1"/>
</dbReference>
<dbReference type="Gene3D" id="4.10.640.10">
    <property type="entry name" value="Ribosomal protein S18"/>
    <property type="match status" value="1"/>
</dbReference>
<dbReference type="HAMAP" id="MF_00270">
    <property type="entry name" value="Ribosomal_bS18"/>
    <property type="match status" value="1"/>
</dbReference>
<dbReference type="InterPro" id="IPR001648">
    <property type="entry name" value="Ribosomal_bS18"/>
</dbReference>
<dbReference type="InterPro" id="IPR018275">
    <property type="entry name" value="Ribosomal_bS18_CS"/>
</dbReference>
<dbReference type="InterPro" id="IPR036870">
    <property type="entry name" value="Ribosomal_bS18_sf"/>
</dbReference>
<dbReference type="NCBIfam" id="TIGR00165">
    <property type="entry name" value="S18"/>
    <property type="match status" value="1"/>
</dbReference>
<dbReference type="PANTHER" id="PTHR13479">
    <property type="entry name" value="30S RIBOSOMAL PROTEIN S18"/>
    <property type="match status" value="1"/>
</dbReference>
<dbReference type="PANTHER" id="PTHR13479:SF40">
    <property type="entry name" value="SMALL RIBOSOMAL SUBUNIT PROTEIN BS18M"/>
    <property type="match status" value="1"/>
</dbReference>
<dbReference type="Pfam" id="PF01084">
    <property type="entry name" value="Ribosomal_S18"/>
    <property type="match status" value="1"/>
</dbReference>
<dbReference type="PRINTS" id="PR00974">
    <property type="entry name" value="RIBOSOMALS18"/>
</dbReference>
<dbReference type="SUPFAM" id="SSF46911">
    <property type="entry name" value="Ribosomal protein S18"/>
    <property type="match status" value="1"/>
</dbReference>
<dbReference type="PROSITE" id="PS00057">
    <property type="entry name" value="RIBOSOMAL_S18"/>
    <property type="match status" value="1"/>
</dbReference>
<comment type="function">
    <text evidence="1">Binds as a heterodimer with protein bS6 to the central domain of the 16S rRNA, where it helps stabilize the platform of the 30S subunit.</text>
</comment>
<comment type="subunit">
    <text evidence="1">Part of the 30S ribosomal subunit. Forms a tight heterodimer with protein bS6.</text>
</comment>
<comment type="similarity">
    <text evidence="1">Belongs to the bacterial ribosomal protein bS18 family.</text>
</comment>
<evidence type="ECO:0000255" key="1">
    <source>
        <dbReference type="HAMAP-Rule" id="MF_00270"/>
    </source>
</evidence>
<evidence type="ECO:0000305" key="2"/>
<reference key="1">
    <citation type="submission" date="2007-05" db="EMBL/GenBank/DDBJ databases">
        <title>Complete sequence of Pseudomonas putida F1.</title>
        <authorList>
            <consortium name="US DOE Joint Genome Institute"/>
            <person name="Copeland A."/>
            <person name="Lucas S."/>
            <person name="Lapidus A."/>
            <person name="Barry K."/>
            <person name="Detter J.C."/>
            <person name="Glavina del Rio T."/>
            <person name="Hammon N."/>
            <person name="Israni S."/>
            <person name="Dalin E."/>
            <person name="Tice H."/>
            <person name="Pitluck S."/>
            <person name="Chain P."/>
            <person name="Malfatti S."/>
            <person name="Shin M."/>
            <person name="Vergez L."/>
            <person name="Schmutz J."/>
            <person name="Larimer F."/>
            <person name="Land M."/>
            <person name="Hauser L."/>
            <person name="Kyrpides N."/>
            <person name="Lykidis A."/>
            <person name="Parales R."/>
            <person name="Richardson P."/>
        </authorList>
    </citation>
    <scope>NUCLEOTIDE SEQUENCE [LARGE SCALE GENOMIC DNA]</scope>
    <source>
        <strain>ATCC 700007 / DSM 6899 / JCM 31910 / BCRC 17059 / LMG 24140 / F1</strain>
    </source>
</reference>
<gene>
    <name evidence="1" type="primary">rpsR</name>
    <name type="ordered locus">Pput_4757</name>
</gene>
<accession>A5W9R7</accession>
<keyword id="KW-0687">Ribonucleoprotein</keyword>
<keyword id="KW-0689">Ribosomal protein</keyword>
<keyword id="KW-0694">RNA-binding</keyword>
<keyword id="KW-0699">rRNA-binding</keyword>
<name>RS18_PSEP1</name>